<comment type="function">
    <text evidence="1">Component of the dark-operative protochlorophyllide reductase (DPOR) that uses Mg-ATP and reduced ferredoxin to reduce ring D of protochlorophyllide (Pchlide) to form chlorophyllide a (Chlide). This reaction is light-independent. The NB-protein (BchN-BchB) is the catalytic component of the complex.</text>
</comment>
<comment type="catalytic activity">
    <reaction evidence="1">
        <text>chlorophyllide a + oxidized 2[4Fe-4S]-[ferredoxin] + 2 ADP + 2 phosphate = protochlorophyllide a + reduced 2[4Fe-4S]-[ferredoxin] + 2 ATP + 2 H2O</text>
        <dbReference type="Rhea" id="RHEA:28202"/>
        <dbReference type="Rhea" id="RHEA-COMP:10002"/>
        <dbReference type="Rhea" id="RHEA-COMP:10004"/>
        <dbReference type="ChEBI" id="CHEBI:15377"/>
        <dbReference type="ChEBI" id="CHEBI:30616"/>
        <dbReference type="ChEBI" id="CHEBI:33722"/>
        <dbReference type="ChEBI" id="CHEBI:33723"/>
        <dbReference type="ChEBI" id="CHEBI:43474"/>
        <dbReference type="ChEBI" id="CHEBI:83348"/>
        <dbReference type="ChEBI" id="CHEBI:83350"/>
        <dbReference type="ChEBI" id="CHEBI:456216"/>
        <dbReference type="EC" id="1.3.7.7"/>
    </reaction>
</comment>
<comment type="cofactor">
    <cofactor evidence="1">
        <name>[4Fe-4S] cluster</name>
        <dbReference type="ChEBI" id="CHEBI:49883"/>
    </cofactor>
    <text evidence="1">Binds 1 [4Fe-4S] cluster per heterodimer. The cluster is bound at the heterodimer interface by residues from both subunits.</text>
</comment>
<comment type="pathway">
    <text evidence="1">Porphyrin-containing compound metabolism; bacteriochlorophyll biosynthesis (light-independent).</text>
</comment>
<comment type="subunit">
    <text evidence="1">Protochlorophyllide reductase is composed of three subunits; BchL, BchN and BchB. Forms a heterotetramer of two BchB and two BchN subunits.</text>
</comment>
<comment type="similarity">
    <text evidence="1">Belongs to the BchN/ChlN family.</text>
</comment>
<comment type="sequence caution" evidence="2">
    <conflict type="erroneous initiation">
        <sequence resource="EMBL-CDS" id="AAM73368"/>
    </conflict>
</comment>
<keyword id="KW-0004">4Fe-4S</keyword>
<keyword id="KW-0067">ATP-binding</keyword>
<keyword id="KW-0077">Bacteriochlorophyll biosynthesis</keyword>
<keyword id="KW-0149">Chlorophyll biosynthesis</keyword>
<keyword id="KW-0408">Iron</keyword>
<keyword id="KW-0411">Iron-sulfur</keyword>
<keyword id="KW-0479">Metal-binding</keyword>
<keyword id="KW-0547">Nucleotide-binding</keyword>
<keyword id="KW-0560">Oxidoreductase</keyword>
<keyword id="KW-0602">Photosynthesis</keyword>
<keyword id="KW-1185">Reference proteome</keyword>
<reference key="1">
    <citation type="journal article" date="2000" name="Science">
        <title>Molecular evidence for the early evolution of photosynthesis.</title>
        <authorList>
            <person name="Xiong J."/>
            <person name="Fischer W.M."/>
            <person name="Inoue K."/>
            <person name="Nakahara M."/>
            <person name="Bauer C.E."/>
        </authorList>
    </citation>
    <scope>NUCLEOTIDE SEQUENCE [GENOMIC DNA]</scope>
    <source>
        <strain>ATCC 49652 / DSM 12025 / NBRC 103806 / TLS</strain>
    </source>
</reference>
<reference key="2">
    <citation type="journal article" date="2002" name="Proc. Natl. Acad. Sci. U.S.A.">
        <title>The complete genome sequence of Chlorobium tepidum TLS, a photosynthetic, anaerobic, green-sulfur bacterium.</title>
        <authorList>
            <person name="Eisen J.A."/>
            <person name="Nelson K.E."/>
            <person name="Paulsen I.T."/>
            <person name="Heidelberg J.F."/>
            <person name="Wu M."/>
            <person name="Dodson R.J."/>
            <person name="DeBoy R.T."/>
            <person name="Gwinn M.L."/>
            <person name="Nelson W.C."/>
            <person name="Haft D.H."/>
            <person name="Hickey E.K."/>
            <person name="Peterson J.D."/>
            <person name="Durkin A.S."/>
            <person name="Kolonay J.F."/>
            <person name="Yang F."/>
            <person name="Holt I.E."/>
            <person name="Umayam L.A."/>
            <person name="Mason T.M."/>
            <person name="Brenner M."/>
            <person name="Shea T.P."/>
            <person name="Parksey D.S."/>
            <person name="Nierman W.C."/>
            <person name="Feldblyum T.V."/>
            <person name="Hansen C.L."/>
            <person name="Craven M.B."/>
            <person name="Radune D."/>
            <person name="Vamathevan J.J."/>
            <person name="Khouri H.M."/>
            <person name="White O."/>
            <person name="Gruber T.M."/>
            <person name="Ketchum K.A."/>
            <person name="Venter J.C."/>
            <person name="Tettelin H."/>
            <person name="Bryant D.A."/>
            <person name="Fraser C.M."/>
        </authorList>
    </citation>
    <scope>NUCLEOTIDE SEQUENCE [LARGE SCALE GENOMIC DNA]</scope>
    <source>
        <strain>ATCC 49652 / DSM 12025 / NBRC 103806 / TLS</strain>
    </source>
</reference>
<gene>
    <name evidence="1" type="primary">bchN</name>
    <name type="ordered locus">CT2152</name>
</gene>
<evidence type="ECO:0000255" key="1">
    <source>
        <dbReference type="HAMAP-Rule" id="MF_00352"/>
    </source>
</evidence>
<evidence type="ECO:0000305" key="2"/>
<accession>Q9F716</accession>
<organism>
    <name type="scientific">Chlorobaculum tepidum (strain ATCC 49652 / DSM 12025 / NBRC 103806 / TLS)</name>
    <name type="common">Chlorobium tepidum</name>
    <dbReference type="NCBI Taxonomy" id="194439"/>
    <lineage>
        <taxon>Bacteria</taxon>
        <taxon>Pseudomonadati</taxon>
        <taxon>Chlorobiota</taxon>
        <taxon>Chlorobiia</taxon>
        <taxon>Chlorobiales</taxon>
        <taxon>Chlorobiaceae</taxon>
        <taxon>Chlorobaculum</taxon>
    </lineage>
</organism>
<dbReference type="EC" id="1.3.7.7" evidence="1"/>
<dbReference type="EMBL" id="AF287482">
    <property type="protein sequence ID" value="AAG12201.1"/>
    <property type="molecule type" value="Genomic_DNA"/>
</dbReference>
<dbReference type="EMBL" id="AE006470">
    <property type="protein sequence ID" value="AAM73368.1"/>
    <property type="status" value="ALT_INIT"/>
    <property type="molecule type" value="Genomic_DNA"/>
</dbReference>
<dbReference type="RefSeq" id="NP_663026.1">
    <property type="nucleotide sequence ID" value="NC_002932.3"/>
</dbReference>
<dbReference type="RefSeq" id="WP_010933805.1">
    <property type="nucleotide sequence ID" value="NC_002932.3"/>
</dbReference>
<dbReference type="SMR" id="Q9F716"/>
<dbReference type="STRING" id="194439.CT2152"/>
<dbReference type="EnsemblBacteria" id="AAM73368">
    <property type="protein sequence ID" value="AAM73368"/>
    <property type="gene ID" value="CT2152"/>
</dbReference>
<dbReference type="KEGG" id="cte:CT2152"/>
<dbReference type="PATRIC" id="fig|194439.7.peg.1952"/>
<dbReference type="eggNOG" id="COG2710">
    <property type="taxonomic scope" value="Bacteria"/>
</dbReference>
<dbReference type="HOGENOM" id="CLU_037170_0_0_10"/>
<dbReference type="OrthoDB" id="5714774at2"/>
<dbReference type="UniPathway" id="UPA00671"/>
<dbReference type="Proteomes" id="UP000001007">
    <property type="component" value="Chromosome"/>
</dbReference>
<dbReference type="GO" id="GO:0051539">
    <property type="term" value="F:4 iron, 4 sulfur cluster binding"/>
    <property type="evidence" value="ECO:0007669"/>
    <property type="project" value="UniProtKB-UniRule"/>
</dbReference>
<dbReference type="GO" id="GO:0005524">
    <property type="term" value="F:ATP binding"/>
    <property type="evidence" value="ECO:0007669"/>
    <property type="project" value="UniProtKB-UniRule"/>
</dbReference>
<dbReference type="GO" id="GO:0046872">
    <property type="term" value="F:metal ion binding"/>
    <property type="evidence" value="ECO:0007669"/>
    <property type="project" value="UniProtKB-KW"/>
</dbReference>
<dbReference type="GO" id="GO:0016730">
    <property type="term" value="F:oxidoreductase activity, acting on iron-sulfur proteins as donors"/>
    <property type="evidence" value="ECO:0007669"/>
    <property type="project" value="InterPro"/>
</dbReference>
<dbReference type="GO" id="GO:0016636">
    <property type="term" value="F:oxidoreductase activity, acting on the CH-CH group of donors, iron-sulfur protein as acceptor"/>
    <property type="evidence" value="ECO:0007669"/>
    <property type="project" value="UniProtKB-UniRule"/>
</dbReference>
<dbReference type="GO" id="GO:0036070">
    <property type="term" value="P:light-independent bacteriochlorophyll biosynthetic process"/>
    <property type="evidence" value="ECO:0007669"/>
    <property type="project" value="UniProtKB-UniRule"/>
</dbReference>
<dbReference type="GO" id="GO:0019685">
    <property type="term" value="P:photosynthesis, dark reaction"/>
    <property type="evidence" value="ECO:0007669"/>
    <property type="project" value="InterPro"/>
</dbReference>
<dbReference type="CDD" id="cd01979">
    <property type="entry name" value="Pchlide_reductase_N"/>
    <property type="match status" value="1"/>
</dbReference>
<dbReference type="Gene3D" id="3.40.50.1980">
    <property type="entry name" value="Nitrogenase molybdenum iron protein domain"/>
    <property type="match status" value="3"/>
</dbReference>
<dbReference type="HAMAP" id="MF_00352">
    <property type="entry name" value="ChlN_BchN"/>
    <property type="match status" value="1"/>
</dbReference>
<dbReference type="InterPro" id="IPR050293">
    <property type="entry name" value="LIPOR_BchN/ChlN"/>
</dbReference>
<dbReference type="InterPro" id="IPR000510">
    <property type="entry name" value="Nase/OxRdtase_comp1"/>
</dbReference>
<dbReference type="InterPro" id="IPR005970">
    <property type="entry name" value="Protochl_reductN"/>
</dbReference>
<dbReference type="NCBIfam" id="TIGR01279">
    <property type="entry name" value="DPOR_bchN"/>
    <property type="match status" value="1"/>
</dbReference>
<dbReference type="NCBIfam" id="NF002768">
    <property type="entry name" value="PRK02842.1"/>
    <property type="match status" value="1"/>
</dbReference>
<dbReference type="PANTHER" id="PTHR39429">
    <property type="entry name" value="LIGHT-INDEPENDENT PROTOCHLOROPHYLLIDE REDUCTASE SUBUNIT N"/>
    <property type="match status" value="1"/>
</dbReference>
<dbReference type="PANTHER" id="PTHR39429:SF3">
    <property type="entry name" value="LIGHT-INDEPENDENT PROTOCHLOROPHYLLIDE REDUCTASE SUBUNIT N"/>
    <property type="match status" value="1"/>
</dbReference>
<dbReference type="Pfam" id="PF00148">
    <property type="entry name" value="Oxidored_nitro"/>
    <property type="match status" value="1"/>
</dbReference>
<dbReference type="PIRSF" id="PIRSF000162">
    <property type="entry name" value="P_chlorophyll_rd"/>
    <property type="match status" value="1"/>
</dbReference>
<dbReference type="SUPFAM" id="SSF53807">
    <property type="entry name" value="Helical backbone' metal receptor"/>
    <property type="match status" value="1"/>
</dbReference>
<name>BCHN_CHLTE</name>
<proteinExistence type="inferred from homology"/>
<feature type="chain" id="PRO_0000208594" description="Light-independent protochlorophyllide reductase subunit N">
    <location>
        <begin position="1"/>
        <end position="419"/>
    </location>
</feature>
<feature type="binding site" evidence="1">
    <location>
        <position position="20"/>
    </location>
    <ligand>
        <name>[4Fe-4S] cluster</name>
        <dbReference type="ChEBI" id="CHEBI:49883"/>
        <note>ligand shared with heterodimeric partner</note>
    </ligand>
</feature>
<feature type="binding site" evidence="1">
    <location>
        <position position="45"/>
    </location>
    <ligand>
        <name>[4Fe-4S] cluster</name>
        <dbReference type="ChEBI" id="CHEBI:49883"/>
        <note>ligand shared with heterodimeric partner</note>
    </ligand>
</feature>
<feature type="binding site" evidence="1">
    <location>
        <position position="102"/>
    </location>
    <ligand>
        <name>[4Fe-4S] cluster</name>
        <dbReference type="ChEBI" id="CHEBI:49883"/>
        <note>ligand shared with heterodimeric partner</note>
    </ligand>
</feature>
<sequence>MPVSSDCQILKEDNVTHSFCGLACVGWLYQKIKDSFFLILGTHTCAHFLQNALGMMIFAKPRFGVALIEEADLSRAEPQLEAVIEEIKRDHNPSVIFLLSSCTPEVMKVDFKGLAHHLSTDKTPVLFVPASGLVFNFTQAEDSVLQALVPFCPEAPAGEKKVVFVGSVNDITADDLRTEAEQLGIPVGGFLPESRFDKLPAIGPDTVLAPIQPYLSRVCSRLNRERGSQVLTSLFPFGPDGTKTFWEDLAAMFGIKVDLSDRAEAAWEKIKPQTDLLKGKKIFLTADTMMELPLARFLKNAGAEVVECSSAYINKKFHARELEALEGVKVVEQPNFHRQLEEIRATRPDMIVTSLMTANPFVGNGFIVKWSMEFTLMSIHSWSGVFTLANLFVSPLLRRESLPEFDESVWLEGVMPSAQ</sequence>
<protein>
    <recommendedName>
        <fullName evidence="1">Light-independent protochlorophyllide reductase subunit N</fullName>
        <shortName evidence="1">DPOR subunit N</shortName>
        <shortName evidence="1">LI-POR subunit N</shortName>
        <ecNumber evidence="1">1.3.7.7</ecNumber>
    </recommendedName>
</protein>